<comment type="function">
    <text evidence="1">May play a role in the development and maintenance of the vertebrate nervous system. Exhibits a limited synaptogenic activity in vitro, restricted to excitatory presynaptic differentiation (By similarity).</text>
</comment>
<comment type="subcellular location">
    <subcellularLocation>
        <location evidence="1">Cell membrane</location>
        <topology evidence="1">Single-pass type I membrane protein</topology>
    </subcellularLocation>
    <subcellularLocation>
        <location evidence="1">Postsynaptic cell membrane</location>
        <topology evidence="1">Single-pass type I membrane protein</topology>
    </subcellularLocation>
</comment>
<comment type="alternative products">
    <event type="alternative splicing"/>
    <isoform>
        <id>Q8BZ81-1</id>
        <name>1</name>
        <sequence type="displayed"/>
    </isoform>
    <isoform>
        <id>Q8BZ81-2</id>
        <name>2</name>
        <sequence type="described" ref="VSP_014191 VSP_014192"/>
    </isoform>
</comment>
<comment type="tissue specificity">
    <text evidence="4">Expressed in neuronal tissues.</text>
</comment>
<comment type="similarity">
    <text evidence="7">Belongs to the LRRTM family.</text>
</comment>
<gene>
    <name type="primary">Lrrtm3</name>
</gene>
<proteinExistence type="evidence at transcript level"/>
<organism>
    <name type="scientific">Mus musculus</name>
    <name type="common">Mouse</name>
    <dbReference type="NCBI Taxonomy" id="10090"/>
    <lineage>
        <taxon>Eukaryota</taxon>
        <taxon>Metazoa</taxon>
        <taxon>Chordata</taxon>
        <taxon>Craniata</taxon>
        <taxon>Vertebrata</taxon>
        <taxon>Euteleostomi</taxon>
        <taxon>Mammalia</taxon>
        <taxon>Eutheria</taxon>
        <taxon>Euarchontoglires</taxon>
        <taxon>Glires</taxon>
        <taxon>Rodentia</taxon>
        <taxon>Myomorpha</taxon>
        <taxon>Muroidea</taxon>
        <taxon>Muridae</taxon>
        <taxon>Murinae</taxon>
        <taxon>Mus</taxon>
        <taxon>Mus</taxon>
    </lineage>
</organism>
<evidence type="ECO:0000250" key="1"/>
<evidence type="ECO:0000255" key="2"/>
<evidence type="ECO:0000256" key="3">
    <source>
        <dbReference type="SAM" id="MobiDB-lite"/>
    </source>
</evidence>
<evidence type="ECO:0000269" key="4">
    <source>
    </source>
</evidence>
<evidence type="ECO:0000303" key="5">
    <source>
    </source>
</evidence>
<evidence type="ECO:0000303" key="6">
    <source>
    </source>
</evidence>
<evidence type="ECO:0000305" key="7"/>
<name>LRRT3_MOUSE</name>
<feature type="signal peptide" evidence="2">
    <location>
        <begin position="1"/>
        <end position="30"/>
    </location>
</feature>
<feature type="chain" id="PRO_0000018357" description="Leucine-rich repeat transmembrane neuronal protein 3">
    <location>
        <begin position="31"/>
        <end position="582"/>
    </location>
</feature>
<feature type="topological domain" description="Extracellular" evidence="2">
    <location>
        <begin position="31"/>
        <end position="420"/>
    </location>
</feature>
<feature type="transmembrane region" description="Helical" evidence="2">
    <location>
        <begin position="421"/>
        <end position="441"/>
    </location>
</feature>
<feature type="topological domain" description="Cytoplasmic" evidence="2">
    <location>
        <begin position="442"/>
        <end position="582"/>
    </location>
</feature>
<feature type="domain" description="LRRNT">
    <location>
        <begin position="31"/>
        <end position="61"/>
    </location>
</feature>
<feature type="repeat" description="LRR 1">
    <location>
        <begin position="63"/>
        <end position="83"/>
    </location>
</feature>
<feature type="repeat" description="LRR 2">
    <location>
        <begin position="86"/>
        <end position="107"/>
    </location>
</feature>
<feature type="repeat" description="LRR 3">
    <location>
        <begin position="110"/>
        <end position="131"/>
    </location>
</feature>
<feature type="repeat" description="LRR 4">
    <location>
        <begin position="134"/>
        <end position="155"/>
    </location>
</feature>
<feature type="repeat" description="LRR 5">
    <location>
        <begin position="158"/>
        <end position="179"/>
    </location>
</feature>
<feature type="repeat" description="LRR 6">
    <location>
        <begin position="182"/>
        <end position="203"/>
    </location>
</feature>
<feature type="repeat" description="LRR 7">
    <location>
        <begin position="206"/>
        <end position="226"/>
    </location>
</feature>
<feature type="repeat" description="LRR 8">
    <location>
        <begin position="230"/>
        <end position="251"/>
    </location>
</feature>
<feature type="repeat" description="LRR 9">
    <location>
        <begin position="254"/>
        <end position="275"/>
    </location>
</feature>
<feature type="repeat" description="LRR 10">
    <location>
        <begin position="279"/>
        <end position="300"/>
    </location>
</feature>
<feature type="domain" description="LRRCT">
    <location>
        <begin position="312"/>
        <end position="363"/>
    </location>
</feature>
<feature type="region of interest" description="Disordered" evidence="3">
    <location>
        <begin position="378"/>
        <end position="410"/>
    </location>
</feature>
<feature type="glycosylation site" description="N-linked (GlcNAc...) asparagine" evidence="2">
    <location>
        <position position="126"/>
    </location>
</feature>
<feature type="glycosylation site" description="N-linked (GlcNAc...) asparagine" evidence="2">
    <location>
        <position position="357"/>
    </location>
</feature>
<feature type="splice variant" id="VSP_014191" description="In isoform 2." evidence="5 6">
    <original>I</original>
    <variation>V</variation>
    <location>
        <position position="514"/>
    </location>
</feature>
<feature type="splice variant" id="VSP_014192" description="In isoform 2." evidence="5 6">
    <location>
        <begin position="515"/>
        <end position="582"/>
    </location>
</feature>
<sequence>MGFNVIRLLRGSAVAVVLAPTVLLTMLSSAERGCPKGCRCEGKMVYCESQKLQEIPSSISAGCLGLSLRYNSLQKLKYNQFKGLNQLTWLYLDHNHISNIDENAFNGIRRLKELILSSNRISYFLNNTFRPVTNLRNLDLSYNQLHSLGSEQFRGLRKLLSLHLRSNSLRTIPVRIFQDCRNLELLDLGYNRIRSLARNVFAGMIRLKELHLEHNQFSKLNLALFPRLVSLQNLYMQWNKISVIGQTMSWTWSSLQRLDLSGNEIEAFSGPSVFQCVPNLQRLNLDSNKLTFIGQEILDSWISLNDISLAGNIWECSRNICSLVNWLRSFKGLRENTIICASPKELQGVNVIDAVKNYSICGKSTTTERFDLARALPKPTFKPKLPRPKHESKPPLPPTVGATEPSPETDVDTEHISFHKIIAGSVALFLSVLVILLVMYVSWKRYPASMKQLQQRSLMRRHRKKKRQSLKQMTPGTQEFYVDYKPTNTETSEMLLNGTGPCTYSKSGSRECEIPLSMNVSTFLAYDQPTISYCGVHHELLSHKSFETNAQEDTMESHLETELDLSTITSAGRISDHKPQLA</sequence>
<keyword id="KW-0025">Alternative splicing</keyword>
<keyword id="KW-1003">Cell membrane</keyword>
<keyword id="KW-0325">Glycoprotein</keyword>
<keyword id="KW-0433">Leucine-rich repeat</keyword>
<keyword id="KW-0472">Membrane</keyword>
<keyword id="KW-0628">Postsynaptic cell membrane</keyword>
<keyword id="KW-1185">Reference proteome</keyword>
<keyword id="KW-0677">Repeat</keyword>
<keyword id="KW-0732">Signal</keyword>
<keyword id="KW-0770">Synapse</keyword>
<keyword id="KW-0812">Transmembrane</keyword>
<keyword id="KW-1133">Transmembrane helix</keyword>
<accession>Q8BZ81</accession>
<accession>Q14CH3</accession>
<accession>Q3TQA3</accession>
<accession>Q8BGJ7</accession>
<reference key="1">
    <citation type="journal article" date="2003" name="Genomics">
        <title>A novel gene family encoding leucine-rich repeat transmembrane proteins differentially expressed in the nervous system.</title>
        <authorList>
            <person name="Lauren J."/>
            <person name="Airaksinen M.S."/>
            <person name="Saarma M."/>
            <person name="Timmusk T.T."/>
        </authorList>
    </citation>
    <scope>NUCLEOTIDE SEQUENCE [MRNA] (ISOFORM 2)</scope>
    <scope>TISSUE SPECIFICITY</scope>
    <source>
        <strain>C57BL/6J</strain>
    </source>
</reference>
<reference key="2">
    <citation type="journal article" date="2005" name="Science">
        <title>The transcriptional landscape of the mammalian genome.</title>
        <authorList>
            <person name="Carninci P."/>
            <person name="Kasukawa T."/>
            <person name="Katayama S."/>
            <person name="Gough J."/>
            <person name="Frith M.C."/>
            <person name="Maeda N."/>
            <person name="Oyama R."/>
            <person name="Ravasi T."/>
            <person name="Lenhard B."/>
            <person name="Wells C."/>
            <person name="Kodzius R."/>
            <person name="Shimokawa K."/>
            <person name="Bajic V.B."/>
            <person name="Brenner S.E."/>
            <person name="Batalov S."/>
            <person name="Forrest A.R."/>
            <person name="Zavolan M."/>
            <person name="Davis M.J."/>
            <person name="Wilming L.G."/>
            <person name="Aidinis V."/>
            <person name="Allen J.E."/>
            <person name="Ambesi-Impiombato A."/>
            <person name="Apweiler R."/>
            <person name="Aturaliya R.N."/>
            <person name="Bailey T.L."/>
            <person name="Bansal M."/>
            <person name="Baxter L."/>
            <person name="Beisel K.W."/>
            <person name="Bersano T."/>
            <person name="Bono H."/>
            <person name="Chalk A.M."/>
            <person name="Chiu K.P."/>
            <person name="Choudhary V."/>
            <person name="Christoffels A."/>
            <person name="Clutterbuck D.R."/>
            <person name="Crowe M.L."/>
            <person name="Dalla E."/>
            <person name="Dalrymple B.P."/>
            <person name="de Bono B."/>
            <person name="Della Gatta G."/>
            <person name="di Bernardo D."/>
            <person name="Down T."/>
            <person name="Engstrom P."/>
            <person name="Fagiolini M."/>
            <person name="Faulkner G."/>
            <person name="Fletcher C.F."/>
            <person name="Fukushima T."/>
            <person name="Furuno M."/>
            <person name="Futaki S."/>
            <person name="Gariboldi M."/>
            <person name="Georgii-Hemming P."/>
            <person name="Gingeras T.R."/>
            <person name="Gojobori T."/>
            <person name="Green R.E."/>
            <person name="Gustincich S."/>
            <person name="Harbers M."/>
            <person name="Hayashi Y."/>
            <person name="Hensch T.K."/>
            <person name="Hirokawa N."/>
            <person name="Hill D."/>
            <person name="Huminiecki L."/>
            <person name="Iacono M."/>
            <person name="Ikeo K."/>
            <person name="Iwama A."/>
            <person name="Ishikawa T."/>
            <person name="Jakt M."/>
            <person name="Kanapin A."/>
            <person name="Katoh M."/>
            <person name="Kawasawa Y."/>
            <person name="Kelso J."/>
            <person name="Kitamura H."/>
            <person name="Kitano H."/>
            <person name="Kollias G."/>
            <person name="Krishnan S.P."/>
            <person name="Kruger A."/>
            <person name="Kummerfeld S.K."/>
            <person name="Kurochkin I.V."/>
            <person name="Lareau L.F."/>
            <person name="Lazarevic D."/>
            <person name="Lipovich L."/>
            <person name="Liu J."/>
            <person name="Liuni S."/>
            <person name="McWilliam S."/>
            <person name="Madan Babu M."/>
            <person name="Madera M."/>
            <person name="Marchionni L."/>
            <person name="Matsuda H."/>
            <person name="Matsuzawa S."/>
            <person name="Miki H."/>
            <person name="Mignone F."/>
            <person name="Miyake S."/>
            <person name="Morris K."/>
            <person name="Mottagui-Tabar S."/>
            <person name="Mulder N."/>
            <person name="Nakano N."/>
            <person name="Nakauchi H."/>
            <person name="Ng P."/>
            <person name="Nilsson R."/>
            <person name="Nishiguchi S."/>
            <person name="Nishikawa S."/>
            <person name="Nori F."/>
            <person name="Ohara O."/>
            <person name="Okazaki Y."/>
            <person name="Orlando V."/>
            <person name="Pang K.C."/>
            <person name="Pavan W.J."/>
            <person name="Pavesi G."/>
            <person name="Pesole G."/>
            <person name="Petrovsky N."/>
            <person name="Piazza S."/>
            <person name="Reed J."/>
            <person name="Reid J.F."/>
            <person name="Ring B.Z."/>
            <person name="Ringwald M."/>
            <person name="Rost B."/>
            <person name="Ruan Y."/>
            <person name="Salzberg S.L."/>
            <person name="Sandelin A."/>
            <person name="Schneider C."/>
            <person name="Schoenbach C."/>
            <person name="Sekiguchi K."/>
            <person name="Semple C.A."/>
            <person name="Seno S."/>
            <person name="Sessa L."/>
            <person name="Sheng Y."/>
            <person name="Shibata Y."/>
            <person name="Shimada H."/>
            <person name="Shimada K."/>
            <person name="Silva D."/>
            <person name="Sinclair B."/>
            <person name="Sperling S."/>
            <person name="Stupka E."/>
            <person name="Sugiura K."/>
            <person name="Sultana R."/>
            <person name="Takenaka Y."/>
            <person name="Taki K."/>
            <person name="Tammoja K."/>
            <person name="Tan S.L."/>
            <person name="Tang S."/>
            <person name="Taylor M.S."/>
            <person name="Tegner J."/>
            <person name="Teichmann S.A."/>
            <person name="Ueda H.R."/>
            <person name="van Nimwegen E."/>
            <person name="Verardo R."/>
            <person name="Wei C.L."/>
            <person name="Yagi K."/>
            <person name="Yamanishi H."/>
            <person name="Zabarovsky E."/>
            <person name="Zhu S."/>
            <person name="Zimmer A."/>
            <person name="Hide W."/>
            <person name="Bult C."/>
            <person name="Grimmond S.M."/>
            <person name="Teasdale R.D."/>
            <person name="Liu E.T."/>
            <person name="Brusic V."/>
            <person name="Quackenbush J."/>
            <person name="Wahlestedt C."/>
            <person name="Mattick J.S."/>
            <person name="Hume D.A."/>
            <person name="Kai C."/>
            <person name="Sasaki D."/>
            <person name="Tomaru Y."/>
            <person name="Fukuda S."/>
            <person name="Kanamori-Katayama M."/>
            <person name="Suzuki M."/>
            <person name="Aoki J."/>
            <person name="Arakawa T."/>
            <person name="Iida J."/>
            <person name="Imamura K."/>
            <person name="Itoh M."/>
            <person name="Kato T."/>
            <person name="Kawaji H."/>
            <person name="Kawagashira N."/>
            <person name="Kawashima T."/>
            <person name="Kojima M."/>
            <person name="Kondo S."/>
            <person name="Konno H."/>
            <person name="Nakano K."/>
            <person name="Ninomiya N."/>
            <person name="Nishio T."/>
            <person name="Okada M."/>
            <person name="Plessy C."/>
            <person name="Shibata K."/>
            <person name="Shiraki T."/>
            <person name="Suzuki S."/>
            <person name="Tagami M."/>
            <person name="Waki K."/>
            <person name="Watahiki A."/>
            <person name="Okamura-Oho Y."/>
            <person name="Suzuki H."/>
            <person name="Kawai J."/>
            <person name="Hayashizaki Y."/>
        </authorList>
    </citation>
    <scope>NUCLEOTIDE SEQUENCE [LARGE SCALE MRNA] (ISOFORMS 1 AND 2)</scope>
    <source>
        <strain>C57BL/6J</strain>
        <tissue>Cerebellum</tissue>
        <tissue>Olfactory bulb</tissue>
    </source>
</reference>
<reference key="3">
    <citation type="journal article" date="2004" name="Genome Res.">
        <title>The status, quality, and expansion of the NIH full-length cDNA project: the Mammalian Gene Collection (MGC).</title>
        <authorList>
            <consortium name="The MGC Project Team"/>
        </authorList>
    </citation>
    <scope>NUCLEOTIDE SEQUENCE [LARGE SCALE MRNA] (ISOFORM 1)</scope>
</reference>
<dbReference type="EMBL" id="AY182029">
    <property type="protein sequence ID" value="AAO67550.1"/>
    <property type="molecule type" value="mRNA"/>
</dbReference>
<dbReference type="EMBL" id="AK032485">
    <property type="protein sequence ID" value="BAE43281.1"/>
    <property type="molecule type" value="mRNA"/>
</dbReference>
<dbReference type="EMBL" id="AK035773">
    <property type="protein sequence ID" value="BAC29181.1"/>
    <property type="molecule type" value="mRNA"/>
</dbReference>
<dbReference type="EMBL" id="AK035858">
    <property type="protein sequence ID" value="BAC29214.1"/>
    <property type="molecule type" value="mRNA"/>
</dbReference>
<dbReference type="EMBL" id="AK035882">
    <property type="protein sequence ID" value="BAC29226.1"/>
    <property type="molecule type" value="mRNA"/>
</dbReference>
<dbReference type="EMBL" id="AK036366">
    <property type="protein sequence ID" value="BAC29398.1"/>
    <property type="molecule type" value="mRNA"/>
</dbReference>
<dbReference type="EMBL" id="AK163753">
    <property type="protein sequence ID" value="BAE37481.1"/>
    <property type="molecule type" value="mRNA"/>
</dbReference>
<dbReference type="EMBL" id="BC113178">
    <property type="protein sequence ID" value="AAI13179.1"/>
    <property type="molecule type" value="mRNA"/>
</dbReference>
<dbReference type="EMBL" id="BC113784">
    <property type="protein sequence ID" value="AAI13785.1"/>
    <property type="molecule type" value="mRNA"/>
</dbReference>
<dbReference type="CCDS" id="CCDS35925.1">
    <molecule id="Q8BZ81-1"/>
</dbReference>
<dbReference type="RefSeq" id="NP_848793.1">
    <molecule id="Q8BZ81-1"/>
    <property type="nucleotide sequence ID" value="NM_178678.4"/>
</dbReference>
<dbReference type="SMR" id="Q8BZ81"/>
<dbReference type="BioGRID" id="229690">
    <property type="interactions" value="1"/>
</dbReference>
<dbReference type="FunCoup" id="Q8BZ81">
    <property type="interactions" value="291"/>
</dbReference>
<dbReference type="STRING" id="10090.ENSMUSP00000101079"/>
<dbReference type="GlyCosmos" id="Q8BZ81">
    <property type="glycosylation" value="2 sites, No reported glycans"/>
</dbReference>
<dbReference type="GlyGen" id="Q8BZ81">
    <property type="glycosylation" value="4 sites, 2 N-linked glycans (2 sites), 1 O-linked glycan (1 site)"/>
</dbReference>
<dbReference type="iPTMnet" id="Q8BZ81"/>
<dbReference type="PhosphoSitePlus" id="Q8BZ81"/>
<dbReference type="PaxDb" id="10090-ENSMUSP00000101079"/>
<dbReference type="ProteomicsDB" id="292372">
    <molecule id="Q8BZ81-1"/>
</dbReference>
<dbReference type="ProteomicsDB" id="292373">
    <molecule id="Q8BZ81-2"/>
</dbReference>
<dbReference type="Antibodypedia" id="14490">
    <property type="antibodies" value="78 antibodies from 25 providers"/>
</dbReference>
<dbReference type="DNASU" id="216028"/>
<dbReference type="Ensembl" id="ENSMUST00000105439.2">
    <molecule id="Q8BZ81-1"/>
    <property type="protein sequence ID" value="ENSMUSP00000101079.2"/>
    <property type="gene ID" value="ENSMUSG00000042846.9"/>
</dbReference>
<dbReference type="GeneID" id="216028"/>
<dbReference type="KEGG" id="mmu:216028"/>
<dbReference type="UCSC" id="uc007fkk.1">
    <molecule id="Q8BZ81-1"/>
    <property type="organism name" value="mouse"/>
</dbReference>
<dbReference type="UCSC" id="uc007fkl.1">
    <molecule id="Q8BZ81-2"/>
    <property type="organism name" value="mouse"/>
</dbReference>
<dbReference type="AGR" id="MGI:2389177"/>
<dbReference type="CTD" id="347731"/>
<dbReference type="MGI" id="MGI:2389177">
    <property type="gene designation" value="Lrrtm3"/>
</dbReference>
<dbReference type="VEuPathDB" id="HostDB:ENSMUSG00000042846"/>
<dbReference type="eggNOG" id="KOG0619">
    <property type="taxonomic scope" value="Eukaryota"/>
</dbReference>
<dbReference type="GeneTree" id="ENSGT00940000160543"/>
<dbReference type="HOGENOM" id="CLU_032965_0_0_1"/>
<dbReference type="InParanoid" id="Q8BZ81"/>
<dbReference type="OMA" id="MIYCESQ"/>
<dbReference type="OrthoDB" id="8731593at2759"/>
<dbReference type="PhylomeDB" id="Q8BZ81"/>
<dbReference type="TreeFam" id="TF332659"/>
<dbReference type="Reactome" id="R-MMU-6794361">
    <property type="pathway name" value="Neurexins and neuroligins"/>
</dbReference>
<dbReference type="BioGRID-ORCS" id="216028">
    <property type="hits" value="3 hits in 77 CRISPR screens"/>
</dbReference>
<dbReference type="CD-CODE" id="CE726F99">
    <property type="entry name" value="Postsynaptic density"/>
</dbReference>
<dbReference type="ChiTaRS" id="Lrrtm3">
    <property type="organism name" value="mouse"/>
</dbReference>
<dbReference type="PRO" id="PR:Q8BZ81"/>
<dbReference type="Proteomes" id="UP000000589">
    <property type="component" value="Chromosome 10"/>
</dbReference>
<dbReference type="RNAct" id="Q8BZ81">
    <property type="molecule type" value="protein"/>
</dbReference>
<dbReference type="Bgee" id="ENSMUSG00000042846">
    <property type="expression patterns" value="Expressed in rostral migratory stream and 140 other cell types or tissues"/>
</dbReference>
<dbReference type="GO" id="GO:0098978">
    <property type="term" value="C:glutamatergic synapse"/>
    <property type="evidence" value="ECO:0000314"/>
    <property type="project" value="SynGO"/>
</dbReference>
<dbReference type="GO" id="GO:0016020">
    <property type="term" value="C:membrane"/>
    <property type="evidence" value="ECO:0000250"/>
    <property type="project" value="MGI"/>
</dbReference>
<dbReference type="GO" id="GO:0098839">
    <property type="term" value="C:postsynaptic density membrane"/>
    <property type="evidence" value="ECO:0000314"/>
    <property type="project" value="SynGO"/>
</dbReference>
<dbReference type="GO" id="GO:1902004">
    <property type="term" value="P:positive regulation of amyloid-beta formation"/>
    <property type="evidence" value="ECO:0000315"/>
    <property type="project" value="MGI"/>
</dbReference>
<dbReference type="GO" id="GO:0051965">
    <property type="term" value="P:positive regulation of synapse assembly"/>
    <property type="evidence" value="ECO:0000314"/>
    <property type="project" value="MGI"/>
</dbReference>
<dbReference type="GO" id="GO:1905606">
    <property type="term" value="P:regulation of presynapse assembly"/>
    <property type="evidence" value="ECO:0007669"/>
    <property type="project" value="Ensembl"/>
</dbReference>
<dbReference type="FunFam" id="3.80.10.10:FF:000005">
    <property type="entry name" value="leucine-rich repeat transmembrane neuronal protein 4"/>
    <property type="match status" value="1"/>
</dbReference>
<dbReference type="Gene3D" id="3.80.10.10">
    <property type="entry name" value="Ribonuclease Inhibitor"/>
    <property type="match status" value="1"/>
</dbReference>
<dbReference type="InterPro" id="IPR001611">
    <property type="entry name" value="Leu-rich_rpt"/>
</dbReference>
<dbReference type="InterPro" id="IPR003591">
    <property type="entry name" value="Leu-rich_rpt_typical-subtyp"/>
</dbReference>
<dbReference type="InterPro" id="IPR032675">
    <property type="entry name" value="LRR_dom_sf"/>
</dbReference>
<dbReference type="InterPro" id="IPR050541">
    <property type="entry name" value="LRR_TM_domain-containing"/>
</dbReference>
<dbReference type="InterPro" id="IPR000372">
    <property type="entry name" value="LRRNT"/>
</dbReference>
<dbReference type="PANTHER" id="PTHR24369">
    <property type="entry name" value="ANTIGEN BSP, PUTATIVE-RELATED"/>
    <property type="match status" value="1"/>
</dbReference>
<dbReference type="PANTHER" id="PTHR24369:SF218">
    <property type="entry name" value="LEUCINE RICH REPEAT TRANSMEMBRANE NEURONAL 3"/>
    <property type="match status" value="1"/>
</dbReference>
<dbReference type="Pfam" id="PF13855">
    <property type="entry name" value="LRR_8"/>
    <property type="match status" value="3"/>
</dbReference>
<dbReference type="SMART" id="SM00365">
    <property type="entry name" value="LRR_SD22"/>
    <property type="match status" value="5"/>
</dbReference>
<dbReference type="SMART" id="SM00369">
    <property type="entry name" value="LRR_TYP"/>
    <property type="match status" value="9"/>
</dbReference>
<dbReference type="SMART" id="SM00013">
    <property type="entry name" value="LRRNT"/>
    <property type="match status" value="1"/>
</dbReference>
<dbReference type="SUPFAM" id="SSF52058">
    <property type="entry name" value="L domain-like"/>
    <property type="match status" value="1"/>
</dbReference>
<dbReference type="PROSITE" id="PS51450">
    <property type="entry name" value="LRR"/>
    <property type="match status" value="9"/>
</dbReference>
<protein>
    <recommendedName>
        <fullName>Leucine-rich repeat transmembrane neuronal protein 3</fullName>
    </recommendedName>
</protein>